<name>CH60_RICB8</name>
<accession>A8GW07</accession>
<dbReference type="EC" id="5.6.1.7" evidence="1"/>
<dbReference type="EMBL" id="CP000849">
    <property type="protein sequence ID" value="ABV79034.1"/>
    <property type="molecule type" value="Genomic_DNA"/>
</dbReference>
<dbReference type="RefSeq" id="WP_011477259.1">
    <property type="nucleotide sequence ID" value="NC_009883.1"/>
</dbReference>
<dbReference type="SMR" id="A8GW07"/>
<dbReference type="KEGG" id="rbo:A1I_03365"/>
<dbReference type="HOGENOM" id="CLU_016503_3_0_5"/>
<dbReference type="GO" id="GO:0005737">
    <property type="term" value="C:cytoplasm"/>
    <property type="evidence" value="ECO:0007669"/>
    <property type="project" value="UniProtKB-SubCell"/>
</dbReference>
<dbReference type="GO" id="GO:0005524">
    <property type="term" value="F:ATP binding"/>
    <property type="evidence" value="ECO:0007669"/>
    <property type="project" value="UniProtKB-UniRule"/>
</dbReference>
<dbReference type="GO" id="GO:0140662">
    <property type="term" value="F:ATP-dependent protein folding chaperone"/>
    <property type="evidence" value="ECO:0007669"/>
    <property type="project" value="InterPro"/>
</dbReference>
<dbReference type="GO" id="GO:0016853">
    <property type="term" value="F:isomerase activity"/>
    <property type="evidence" value="ECO:0007669"/>
    <property type="project" value="UniProtKB-KW"/>
</dbReference>
<dbReference type="GO" id="GO:0051082">
    <property type="term" value="F:unfolded protein binding"/>
    <property type="evidence" value="ECO:0007669"/>
    <property type="project" value="UniProtKB-UniRule"/>
</dbReference>
<dbReference type="GO" id="GO:0042026">
    <property type="term" value="P:protein refolding"/>
    <property type="evidence" value="ECO:0007669"/>
    <property type="project" value="UniProtKB-UniRule"/>
</dbReference>
<dbReference type="CDD" id="cd03344">
    <property type="entry name" value="GroEL"/>
    <property type="match status" value="1"/>
</dbReference>
<dbReference type="FunFam" id="3.50.7.10:FF:000001">
    <property type="entry name" value="60 kDa chaperonin"/>
    <property type="match status" value="1"/>
</dbReference>
<dbReference type="Gene3D" id="3.50.7.10">
    <property type="entry name" value="GroEL"/>
    <property type="match status" value="1"/>
</dbReference>
<dbReference type="Gene3D" id="1.10.560.10">
    <property type="entry name" value="GroEL-like equatorial domain"/>
    <property type="match status" value="1"/>
</dbReference>
<dbReference type="Gene3D" id="3.30.260.10">
    <property type="entry name" value="TCP-1-like chaperonin intermediate domain"/>
    <property type="match status" value="1"/>
</dbReference>
<dbReference type="HAMAP" id="MF_00600">
    <property type="entry name" value="CH60"/>
    <property type="match status" value="1"/>
</dbReference>
<dbReference type="InterPro" id="IPR018370">
    <property type="entry name" value="Chaperonin_Cpn60_CS"/>
</dbReference>
<dbReference type="InterPro" id="IPR001844">
    <property type="entry name" value="Cpn60/GroEL"/>
</dbReference>
<dbReference type="InterPro" id="IPR002423">
    <property type="entry name" value="Cpn60/GroEL/TCP-1"/>
</dbReference>
<dbReference type="InterPro" id="IPR027409">
    <property type="entry name" value="GroEL-like_apical_dom_sf"/>
</dbReference>
<dbReference type="InterPro" id="IPR027413">
    <property type="entry name" value="GROEL-like_equatorial_sf"/>
</dbReference>
<dbReference type="InterPro" id="IPR027410">
    <property type="entry name" value="TCP-1-like_intermed_sf"/>
</dbReference>
<dbReference type="NCBIfam" id="TIGR02348">
    <property type="entry name" value="GroEL"/>
    <property type="match status" value="1"/>
</dbReference>
<dbReference type="NCBIfam" id="NF000592">
    <property type="entry name" value="PRK00013.1"/>
    <property type="match status" value="1"/>
</dbReference>
<dbReference type="NCBIfam" id="NF009487">
    <property type="entry name" value="PRK12849.1"/>
    <property type="match status" value="1"/>
</dbReference>
<dbReference type="NCBIfam" id="NF009488">
    <property type="entry name" value="PRK12850.1"/>
    <property type="match status" value="1"/>
</dbReference>
<dbReference type="NCBIfam" id="NF009489">
    <property type="entry name" value="PRK12851.1"/>
    <property type="match status" value="1"/>
</dbReference>
<dbReference type="PANTHER" id="PTHR45633">
    <property type="entry name" value="60 KDA HEAT SHOCK PROTEIN, MITOCHONDRIAL"/>
    <property type="match status" value="1"/>
</dbReference>
<dbReference type="Pfam" id="PF00118">
    <property type="entry name" value="Cpn60_TCP1"/>
    <property type="match status" value="1"/>
</dbReference>
<dbReference type="PRINTS" id="PR00298">
    <property type="entry name" value="CHAPERONIN60"/>
</dbReference>
<dbReference type="SUPFAM" id="SSF52029">
    <property type="entry name" value="GroEL apical domain-like"/>
    <property type="match status" value="1"/>
</dbReference>
<dbReference type="SUPFAM" id="SSF48592">
    <property type="entry name" value="GroEL equatorial domain-like"/>
    <property type="match status" value="1"/>
</dbReference>
<dbReference type="SUPFAM" id="SSF54849">
    <property type="entry name" value="GroEL-intermediate domain like"/>
    <property type="match status" value="1"/>
</dbReference>
<dbReference type="PROSITE" id="PS00296">
    <property type="entry name" value="CHAPERONINS_CPN60"/>
    <property type="match status" value="1"/>
</dbReference>
<feature type="chain" id="PRO_1000025828" description="Chaperonin GroEL">
    <location>
        <begin position="1"/>
        <end position="550"/>
    </location>
</feature>
<feature type="binding site" evidence="1">
    <location>
        <begin position="30"/>
        <end position="33"/>
    </location>
    <ligand>
        <name>ATP</name>
        <dbReference type="ChEBI" id="CHEBI:30616"/>
    </ligand>
</feature>
<feature type="binding site" evidence="1">
    <location>
        <position position="51"/>
    </location>
    <ligand>
        <name>ATP</name>
        <dbReference type="ChEBI" id="CHEBI:30616"/>
    </ligand>
</feature>
<feature type="binding site" evidence="1">
    <location>
        <begin position="87"/>
        <end position="91"/>
    </location>
    <ligand>
        <name>ATP</name>
        <dbReference type="ChEBI" id="CHEBI:30616"/>
    </ligand>
</feature>
<feature type="binding site" evidence="1">
    <location>
        <position position="415"/>
    </location>
    <ligand>
        <name>ATP</name>
        <dbReference type="ChEBI" id="CHEBI:30616"/>
    </ligand>
</feature>
<feature type="binding site" evidence="1">
    <location>
        <position position="496"/>
    </location>
    <ligand>
        <name>ATP</name>
        <dbReference type="ChEBI" id="CHEBI:30616"/>
    </ligand>
</feature>
<proteinExistence type="inferred from homology"/>
<evidence type="ECO:0000255" key="1">
    <source>
        <dbReference type="HAMAP-Rule" id="MF_00600"/>
    </source>
</evidence>
<sequence>MATKLIKHGSKAREQMLEGIDILADAVKVTLGPKGRNVLIEQSFGAPKITKDGVTVAKSIELKDKIRNAGAQLLKSAATKAAEVAGDGTTTATVLARALAREGNKLVAAGYNPMDLKRGMDLAVNTVLEEVKKASKKIDSQEEIAQVGTISSNGDKEIGEKIAKAMEEVGKEGVITVEEAKNFSFDVEVVKGMMFDRGYLSPYFVTNSEKMVAELENPYILLFEKKLSNLQPMLPILEAVVQSQRPLLIIAEDVEGEALATLVVNRLRGGLKVAAVKAPGFGDRRKAMMEDIAILTNGELITEDLGMKLENVSLKSLGHAKRVTISKENTVIVDGSGDKKNIEERVLQIKSHIAETTSDYDKEKLQERLAKLSGGVAVLKVGGATEVEVKERKDRVEDALAATRAAVEEGVVAGGGVTLLHASQALKNLKVDNKDQQAGIELVIEALKDPIKQIVENAGENGGVVVGKLLEHKDKNFGFNAQDMQYVDMIKAGIIDPAKVVRTALQDAASVASLIITTETLIVDEPEDKENPMPMRGGMGGMGGMGGMDF</sequence>
<protein>
    <recommendedName>
        <fullName evidence="1">Chaperonin GroEL</fullName>
        <ecNumber evidence="1">5.6.1.7</ecNumber>
    </recommendedName>
    <alternativeName>
        <fullName evidence="1">60 kDa chaperonin</fullName>
    </alternativeName>
    <alternativeName>
        <fullName evidence="1">Chaperonin-60</fullName>
        <shortName evidence="1">Cpn60</shortName>
    </alternativeName>
</protein>
<gene>
    <name evidence="1" type="primary">groEL</name>
    <name evidence="1" type="synonym">groL</name>
    <name type="ordered locus">A1I_03365</name>
</gene>
<comment type="function">
    <text evidence="1">Together with its co-chaperonin GroES, plays an essential role in assisting protein folding. The GroEL-GroES system forms a nano-cage that allows encapsulation of the non-native substrate proteins and provides a physical environment optimized to promote and accelerate protein folding.</text>
</comment>
<comment type="catalytic activity">
    <reaction evidence="1">
        <text>ATP + H2O + a folded polypeptide = ADP + phosphate + an unfolded polypeptide.</text>
        <dbReference type="EC" id="5.6.1.7"/>
    </reaction>
</comment>
<comment type="subunit">
    <text evidence="1">Forms a cylinder of 14 subunits composed of two heptameric rings stacked back-to-back. Interacts with the co-chaperonin GroES.</text>
</comment>
<comment type="subcellular location">
    <subcellularLocation>
        <location evidence="1">Cytoplasm</location>
    </subcellularLocation>
</comment>
<comment type="similarity">
    <text evidence="1">Belongs to the chaperonin (HSP60) family.</text>
</comment>
<keyword id="KW-0067">ATP-binding</keyword>
<keyword id="KW-0143">Chaperone</keyword>
<keyword id="KW-0963">Cytoplasm</keyword>
<keyword id="KW-0413">Isomerase</keyword>
<keyword id="KW-0547">Nucleotide-binding</keyword>
<reference key="1">
    <citation type="submission" date="2007-09" db="EMBL/GenBank/DDBJ databases">
        <title>Complete genome sequencing of Rickettsia bellii.</title>
        <authorList>
            <person name="Madan A."/>
            <person name="Lee H."/>
            <person name="Madan A."/>
            <person name="Yoon J.-G."/>
            <person name="Ryu G.-Y."/>
            <person name="Dasch G."/>
            <person name="Ereemeva M."/>
        </authorList>
    </citation>
    <scope>NUCLEOTIDE SEQUENCE [LARGE SCALE GENOMIC DNA]</scope>
    <source>
        <strain>OSU 85-389</strain>
    </source>
</reference>
<organism>
    <name type="scientific">Rickettsia bellii (strain OSU 85-389)</name>
    <dbReference type="NCBI Taxonomy" id="391896"/>
    <lineage>
        <taxon>Bacteria</taxon>
        <taxon>Pseudomonadati</taxon>
        <taxon>Pseudomonadota</taxon>
        <taxon>Alphaproteobacteria</taxon>
        <taxon>Rickettsiales</taxon>
        <taxon>Rickettsiaceae</taxon>
        <taxon>Rickettsieae</taxon>
        <taxon>Rickettsia</taxon>
        <taxon>belli group</taxon>
    </lineage>
</organism>